<comment type="function">
    <text evidence="4">Receptor for the leucine-rich nuclear export signal (NES).</text>
</comment>
<comment type="subunit">
    <text evidence="4">Interacts with php4.</text>
</comment>
<comment type="subcellular location">
    <subcellularLocation>
        <location>Nucleus</location>
    </subcellularLocation>
    <text>Localized in the nucleus and at its periphery.</text>
</comment>
<comment type="miscellaneous">
    <text>Cellular target of leptomycin B (LMB), a nuclear export inhibitor. LMB alkylates Cys-529 leading to CRM1 inactivation.</text>
</comment>
<comment type="similarity">
    <text evidence="6">Belongs to the exportin family.</text>
</comment>
<accession>P14068</accession>
<accession>Q09197</accession>
<accession>Q9HF66</accession>
<accession>Q9URF4</accession>
<accession>Q9UTF9</accession>
<accession>Q9UTG0</accession>
<accession>Q9UUL0</accession>
<accession>Q9UUL1</accession>
<proteinExistence type="evidence at protein level"/>
<name>XPO1_SCHPO</name>
<organism>
    <name type="scientific">Schizosaccharomyces pombe (strain 972 / ATCC 24843)</name>
    <name type="common">Fission yeast</name>
    <dbReference type="NCBI Taxonomy" id="284812"/>
    <lineage>
        <taxon>Eukaryota</taxon>
        <taxon>Fungi</taxon>
        <taxon>Dikarya</taxon>
        <taxon>Ascomycota</taxon>
        <taxon>Taphrinomycotina</taxon>
        <taxon>Schizosaccharomycetes</taxon>
        <taxon>Schizosaccharomycetales</taxon>
        <taxon>Schizosaccharomycetaceae</taxon>
        <taxon>Schizosaccharomyces</taxon>
    </lineage>
</organism>
<sequence length="1078" mass="123567">MEGILAFDRELDVALLDRVVQTFYQGVGAEQQQAQQVLTQFQAHPDAWSQAYSILEKSEYPQTKYIALSVLDKLITTRWKMLPKEQRLGIRNYIVAVMIKNSSDETVLQQQKTFLNKLDLTLVQILKQEWPHNWPNFIPEIVQASKTNLSLCENNMIVLRLLSEEIFDYSAEQMTQLKTKNLKNQMCGEFAEIFQLCSQILERAQKPSLIKATLGTLLRFLNWIPLGYIFETNIVELITNRFLNVPDFRNVTIECLTEIASLTSQPQYNDKFVTMFNLVMTSVNSMLPLQTDFREAYEESSTNEQDFIQNLALFLCAFFSSHLRPLENPENQEVLLNAHSYLLNISRINEREIFKICLEYWSKLVAQLYEEMQQIPMSEMNPLLNLSSPTSLISSNPNMLANLPLRKHIYKDILSTLRLVMIENMVKPEEVLIVENDEGEIVREFVKETDTITLYKSMREVLVYLTHLDVVDTEIVMTEKLARIVVGTEWSWQNLNTLCWAIGSISGAMNEEMEKRFLVNVIKDLLGLCEMKRGKDNKAVVASNIMYVVGQYPRFLKAHWKFLKTVVNKLFEFMHEYHEGVQDMACDTFIKIAQKCRRHFVAQQLGETEPFINEIIRNLAKTTEDLTPQQTHTFYEACGYMISAQPQKHLQERLIFDLMALPNQAWENIVAQAAQNAQVLGDPQTVKILANVLKTNVAACTSIGSGFYPQIAKNYVDMLGLYKAVSGLISEVVAAQGNIATKTPHVRGLRTIKKEILKLVDAYISRAEDLELVGNTLIPALFEAVLLDYLQNVPDARDAEVLNLITTIVNQLSELLTDKIPLVLDAVFGCTLEMISKDFSEYPEHRAAFFQLLRAINLNCFPALLNIPAPQFKLVINSIVWSFKHVSRDIQETGLNILLELINNMASMGPDVSNAFFQTYYISLLQDILYVLTDSDHKSGFKLQSLILARLFYLVESNQITVPLYDPSQFPQEMNNQLFLRQYIMNLLVTAFPHLQPIQIQEFVQTVLALNQDSIKFKLALRDFLIQLKEFGGDNAELYLEEKEQELAAQQKAQLEKAMTVPGMIKPVDMPTMEEEEL</sequence>
<keyword id="KW-0539">Nucleus</keyword>
<keyword id="KW-0653">Protein transport</keyword>
<keyword id="KW-1185">Reference proteome</keyword>
<keyword id="KW-0813">Transport</keyword>
<reference key="1">
    <citation type="journal article" date="1989" name="J. Cell Biol.">
        <title>Higher order chromosome structure is affected by cold-sensitive mutations in a Schizosaccharomyces pombe gene crm1+ which encodes a 115-kD protein preferentially localized in the nucleus and its periphery.</title>
        <authorList>
            <person name="Adachi Y."/>
            <person name="Yanagida M."/>
        </authorList>
    </citation>
    <scope>NUCLEOTIDE SEQUENCE [GENOMIC DNA]</scope>
</reference>
<reference key="2">
    <citation type="submission" date="1999-10" db="EMBL/GenBank/DDBJ databases">
        <authorList>
            <person name="Adachi Y."/>
        </authorList>
    </citation>
    <scope>SEQUENCE REVISION</scope>
</reference>
<reference key="3">
    <citation type="journal article" date="1992" name="Mol. Cell. Biol.">
        <title>Fission yeast pap1-dependent transcription is negatively regulated by an essential nuclear protein, crm1.</title>
        <authorList>
            <person name="Toda T."/>
            <person name="Shimanuki M."/>
            <person name="Saka Y."/>
            <person name="Yamano H."/>
            <person name="Adachi Y."/>
            <person name="Shirakawa M."/>
            <person name="Kyogoku Y."/>
            <person name="Yanagida M."/>
        </authorList>
    </citation>
    <scope>NUCLEOTIDE SEQUENCE [GENOMIC DNA]</scope>
</reference>
<reference key="4">
    <citation type="journal article" date="1994" name="J. Biol. Chem.">
        <title>Leptomycin B targets a regulatory cascade of crm1, a fission yeast nuclear protein, involved in control of higher order chromosome structure and gene expression.</title>
        <authorList>
            <person name="Nishi K."/>
            <person name="Yoshida M."/>
            <person name="Fujiwara D."/>
            <person name="Nishikawa M."/>
            <person name="Horinouchi S."/>
            <person name="Beppu T."/>
        </authorList>
    </citation>
    <scope>NUCLEOTIDE SEQUENCE [GENOMIC DNA]</scope>
    <scope>MUTAGENESIS OF GLY-503 AND MET-546</scope>
    <source>
        <strain>LM102</strain>
    </source>
</reference>
<reference key="5">
    <citation type="journal article" date="1999" name="Proc. Natl. Acad. Sci. U.S.A.">
        <title>Leptomycin B inactivates CRM1/exportin 1 by covalent modification at a cysteine residue in the central conserved region.</title>
        <authorList>
            <person name="Kudo N."/>
            <person name="Matsumori N."/>
            <person name="Taoka H."/>
            <person name="Fujiwara D."/>
            <person name="Schreiner E.P."/>
            <person name="Wolff B."/>
            <person name="Yoshida M."/>
            <person name="Horinouchi S."/>
        </authorList>
    </citation>
    <scope>NUCLEOTIDE SEQUENCE [GENOMIC DNA]</scope>
    <scope>MUTAGENESIS OF CYS-529</scope>
    <source>
        <strain>AC1</strain>
        <strain>FN41</strain>
    </source>
</reference>
<reference key="6">
    <citation type="journal article" date="2001" name="Curr. Genet.">
        <title>Sequence of Crm1/exportin 1 mutant alleles reveals critical sites associated with multidrug resistance.</title>
        <authorList>
            <person name="Carobbio S."/>
            <person name="Realini C."/>
            <person name="Norbury C.J."/>
            <person name="Toda T."/>
            <person name="Cavalli F."/>
            <person name="Spataro V."/>
        </authorList>
    </citation>
    <scope>NUCLEOTIDE SEQUENCE [GENOMIC DNA]</scope>
    <scope>MUTAGENESIS OF GLU-129; GLU-299; GLU-430 AND PHE-992</scope>
    <source>
        <strain>972 / HM123</strain>
    </source>
</reference>
<reference key="7">
    <citation type="journal article" date="1998" name="Mol. Gen. Genet.">
        <title>Cloning of caf1+, caf2+ and caf4+ from Schizosaccharomyces pombe: their involvement in multidrug resistance, UV and pH sensitivity.</title>
        <authorList>
            <person name="Benko Z."/>
            <person name="Sipiczki M."/>
            <person name="Carr A.M."/>
        </authorList>
    </citation>
    <scope>NUCLEOTIDE SEQUENCE [GENOMIC DNA]</scope>
</reference>
<reference key="8">
    <citation type="journal article" date="2002" name="Nature">
        <title>The genome sequence of Schizosaccharomyces pombe.</title>
        <authorList>
            <person name="Wood V."/>
            <person name="Gwilliam R."/>
            <person name="Rajandream M.A."/>
            <person name="Lyne M.H."/>
            <person name="Lyne R."/>
            <person name="Stewart A."/>
            <person name="Sgouros J.G."/>
            <person name="Peat N."/>
            <person name="Hayles J."/>
            <person name="Baker S.G."/>
            <person name="Basham D."/>
            <person name="Bowman S."/>
            <person name="Brooks K."/>
            <person name="Brown D."/>
            <person name="Brown S."/>
            <person name="Chillingworth T."/>
            <person name="Churcher C.M."/>
            <person name="Collins M."/>
            <person name="Connor R."/>
            <person name="Cronin A."/>
            <person name="Davis P."/>
            <person name="Feltwell T."/>
            <person name="Fraser A."/>
            <person name="Gentles S."/>
            <person name="Goble A."/>
            <person name="Hamlin N."/>
            <person name="Harris D.E."/>
            <person name="Hidalgo J."/>
            <person name="Hodgson G."/>
            <person name="Holroyd S."/>
            <person name="Hornsby T."/>
            <person name="Howarth S."/>
            <person name="Huckle E.J."/>
            <person name="Hunt S."/>
            <person name="Jagels K."/>
            <person name="James K.D."/>
            <person name="Jones L."/>
            <person name="Jones M."/>
            <person name="Leather S."/>
            <person name="McDonald S."/>
            <person name="McLean J."/>
            <person name="Mooney P."/>
            <person name="Moule S."/>
            <person name="Mungall K.L."/>
            <person name="Murphy L.D."/>
            <person name="Niblett D."/>
            <person name="Odell C."/>
            <person name="Oliver K."/>
            <person name="O'Neil S."/>
            <person name="Pearson D."/>
            <person name="Quail M.A."/>
            <person name="Rabbinowitsch E."/>
            <person name="Rutherford K.M."/>
            <person name="Rutter S."/>
            <person name="Saunders D."/>
            <person name="Seeger K."/>
            <person name="Sharp S."/>
            <person name="Skelton J."/>
            <person name="Simmonds M.N."/>
            <person name="Squares R."/>
            <person name="Squares S."/>
            <person name="Stevens K."/>
            <person name="Taylor K."/>
            <person name="Taylor R.G."/>
            <person name="Tivey A."/>
            <person name="Walsh S.V."/>
            <person name="Warren T."/>
            <person name="Whitehead S."/>
            <person name="Woodward J.R."/>
            <person name="Volckaert G."/>
            <person name="Aert R."/>
            <person name="Robben J."/>
            <person name="Grymonprez B."/>
            <person name="Weltjens I."/>
            <person name="Vanstreels E."/>
            <person name="Rieger M."/>
            <person name="Schaefer M."/>
            <person name="Mueller-Auer S."/>
            <person name="Gabel C."/>
            <person name="Fuchs M."/>
            <person name="Duesterhoeft A."/>
            <person name="Fritzc C."/>
            <person name="Holzer E."/>
            <person name="Moestl D."/>
            <person name="Hilbert H."/>
            <person name="Borzym K."/>
            <person name="Langer I."/>
            <person name="Beck A."/>
            <person name="Lehrach H."/>
            <person name="Reinhardt R."/>
            <person name="Pohl T.M."/>
            <person name="Eger P."/>
            <person name="Zimmermann W."/>
            <person name="Wedler H."/>
            <person name="Wambutt R."/>
            <person name="Purnelle B."/>
            <person name="Goffeau A."/>
            <person name="Cadieu E."/>
            <person name="Dreano S."/>
            <person name="Gloux S."/>
            <person name="Lelaure V."/>
            <person name="Mottier S."/>
            <person name="Galibert F."/>
            <person name="Aves S.J."/>
            <person name="Xiang Z."/>
            <person name="Hunt C."/>
            <person name="Moore K."/>
            <person name="Hurst S.M."/>
            <person name="Lucas M."/>
            <person name="Rochet M."/>
            <person name="Gaillardin C."/>
            <person name="Tallada V.A."/>
            <person name="Garzon A."/>
            <person name="Thode G."/>
            <person name="Daga R.R."/>
            <person name="Cruzado L."/>
            <person name="Jimenez J."/>
            <person name="Sanchez M."/>
            <person name="del Rey F."/>
            <person name="Benito J."/>
            <person name="Dominguez A."/>
            <person name="Revuelta J.L."/>
            <person name="Moreno S."/>
            <person name="Armstrong J."/>
            <person name="Forsburg S.L."/>
            <person name="Cerutti L."/>
            <person name="Lowe T."/>
            <person name="McCombie W.R."/>
            <person name="Paulsen I."/>
            <person name="Potashkin J."/>
            <person name="Shpakovski G.V."/>
            <person name="Ussery D."/>
            <person name="Barrell B.G."/>
            <person name="Nurse P."/>
        </authorList>
    </citation>
    <scope>NUCLEOTIDE SEQUENCE [LARGE SCALE GENOMIC DNA]</scope>
    <source>
        <strain>972 / ATCC 24843</strain>
    </source>
</reference>
<reference key="9">
    <citation type="journal article" date="2009" name="J. Biol. Chem.">
        <title>Both Php4 function and subcellular localization are regulated by iron via a multistep mechanism involving the glutaredoxin Grx4 and the exportin Crm1.</title>
        <authorList>
            <person name="Mercier A."/>
            <person name="Labbe S."/>
        </authorList>
    </citation>
    <scope>FUNCTION</scope>
    <scope>INTERACTION WITH PHP4</scope>
</reference>
<gene>
    <name type="primary">xpo1</name>
    <name type="synonym">caf2</name>
    <name type="synonym">crm1</name>
    <name type="ORF">SPAC1805.17</name>
    <name type="ORF">SPAC1B2.01</name>
</gene>
<dbReference type="EMBL" id="X15482">
    <property type="protein sequence ID" value="CAB40824.2"/>
    <property type="molecule type" value="Genomic_DNA"/>
</dbReference>
<dbReference type="EMBL" id="D16355">
    <property type="protein sequence ID" value="BAA03858.1"/>
    <property type="molecule type" value="Genomic_DNA"/>
</dbReference>
<dbReference type="EMBL" id="AB027496">
    <property type="protein sequence ID" value="BAA83345.1"/>
    <property type="molecule type" value="Genomic_DNA"/>
</dbReference>
<dbReference type="EMBL" id="AB027497">
    <property type="protein sequence ID" value="BAA83346.1"/>
    <property type="molecule type" value="Genomic_DNA"/>
</dbReference>
<dbReference type="EMBL" id="AF208056">
    <property type="protein sequence ID" value="AAG35722.1"/>
    <property type="molecule type" value="Genomic_DNA"/>
</dbReference>
<dbReference type="EMBL" id="CU329670">
    <property type="protein sequence ID" value="CAB55858.2"/>
    <property type="molecule type" value="Genomic_DNA"/>
</dbReference>
<dbReference type="PIR" id="D45029">
    <property type="entry name" value="D45029"/>
</dbReference>
<dbReference type="PIR" id="T43511">
    <property type="entry name" value="T43511"/>
</dbReference>
<dbReference type="PIR" id="T50137">
    <property type="entry name" value="T50137"/>
</dbReference>
<dbReference type="RefSeq" id="XP_001713070.1">
    <property type="nucleotide sequence ID" value="XM_001713018.2"/>
</dbReference>
<dbReference type="SMR" id="P14068"/>
<dbReference type="BioGRID" id="280563">
    <property type="interactions" value="21"/>
</dbReference>
<dbReference type="FunCoup" id="P14068">
    <property type="interactions" value="1274"/>
</dbReference>
<dbReference type="STRING" id="284812.P14068"/>
<dbReference type="PaxDb" id="4896-SPAC1805.17.1"/>
<dbReference type="EnsemblFungi" id="SPAC1805.17.1">
    <property type="protein sequence ID" value="SPAC1805.17.1:pep"/>
    <property type="gene ID" value="SPAC1805.17"/>
</dbReference>
<dbReference type="PomBase" id="SPAC1805.17"/>
<dbReference type="VEuPathDB" id="FungiDB:SPAC1805.17"/>
<dbReference type="eggNOG" id="KOG2020">
    <property type="taxonomic scope" value="Eukaryota"/>
</dbReference>
<dbReference type="HOGENOM" id="CLU_011906_0_0_1"/>
<dbReference type="InParanoid" id="P14068"/>
<dbReference type="OMA" id="WAFKHNN"/>
<dbReference type="PhylomeDB" id="P14068"/>
<dbReference type="Reactome" id="R-SPO-5687128">
    <property type="pathway name" value="MAPK6/MAPK4 signaling"/>
</dbReference>
<dbReference type="PRO" id="PR:P14068"/>
<dbReference type="Proteomes" id="UP000002485">
    <property type="component" value="Chromosome I"/>
</dbReference>
<dbReference type="GO" id="GO:0005737">
    <property type="term" value="C:cytoplasm"/>
    <property type="evidence" value="ECO:0000318"/>
    <property type="project" value="GO_Central"/>
</dbReference>
<dbReference type="GO" id="GO:0005829">
    <property type="term" value="C:cytosol"/>
    <property type="evidence" value="ECO:0007005"/>
    <property type="project" value="PomBase"/>
</dbReference>
<dbReference type="GO" id="GO:0005635">
    <property type="term" value="C:nuclear envelope"/>
    <property type="evidence" value="ECO:0007005"/>
    <property type="project" value="PomBase"/>
</dbReference>
<dbReference type="GO" id="GO:0034399">
    <property type="term" value="C:nuclear periphery"/>
    <property type="evidence" value="ECO:0000314"/>
    <property type="project" value="PomBase"/>
</dbReference>
<dbReference type="GO" id="GO:0005643">
    <property type="term" value="C:nuclear pore"/>
    <property type="evidence" value="ECO:0000255"/>
    <property type="project" value="PomBase"/>
</dbReference>
<dbReference type="GO" id="GO:0005634">
    <property type="term" value="C:nucleus"/>
    <property type="evidence" value="ECO:0000314"/>
    <property type="project" value="PomBase"/>
</dbReference>
<dbReference type="GO" id="GO:0005525">
    <property type="term" value="F:GTP binding"/>
    <property type="evidence" value="ECO:0000303"/>
    <property type="project" value="PomBase"/>
</dbReference>
<dbReference type="GO" id="GO:0005049">
    <property type="term" value="F:nuclear export signal receptor activity"/>
    <property type="evidence" value="ECO:0000314"/>
    <property type="project" value="PomBase"/>
</dbReference>
<dbReference type="GO" id="GO:0031267">
    <property type="term" value="F:small GTPase binding"/>
    <property type="evidence" value="ECO:0007669"/>
    <property type="project" value="InterPro"/>
</dbReference>
<dbReference type="GO" id="GO:0006611">
    <property type="term" value="P:protein export from nucleus"/>
    <property type="evidence" value="ECO:0000315"/>
    <property type="project" value="PomBase"/>
</dbReference>
<dbReference type="GO" id="GO:0000055">
    <property type="term" value="P:ribosomal large subunit export from nucleus"/>
    <property type="evidence" value="ECO:0000318"/>
    <property type="project" value="GO_Central"/>
</dbReference>
<dbReference type="GO" id="GO:0000056">
    <property type="term" value="P:ribosomal small subunit export from nucleus"/>
    <property type="evidence" value="ECO:0000318"/>
    <property type="project" value="GO_Central"/>
</dbReference>
<dbReference type="FunFam" id="1.25.10.10:FF:000022">
    <property type="entry name" value="protein EXPORTIN 1A"/>
    <property type="match status" value="1"/>
</dbReference>
<dbReference type="Gene3D" id="1.25.10.10">
    <property type="entry name" value="Leucine-rich Repeat Variant"/>
    <property type="match status" value="1"/>
</dbReference>
<dbReference type="InterPro" id="IPR011989">
    <property type="entry name" value="ARM-like"/>
</dbReference>
<dbReference type="InterPro" id="IPR016024">
    <property type="entry name" value="ARM-type_fold"/>
</dbReference>
<dbReference type="InterPro" id="IPR041123">
    <property type="entry name" value="CRM1_repeat"/>
</dbReference>
<dbReference type="InterPro" id="IPR041235">
    <property type="entry name" value="Exp1_repeat_2"/>
</dbReference>
<dbReference type="InterPro" id="IPR013598">
    <property type="entry name" value="Exportin-1/Importin-b-like"/>
</dbReference>
<dbReference type="InterPro" id="IPR001494">
    <property type="entry name" value="Importin-beta_N"/>
</dbReference>
<dbReference type="InterPro" id="IPR045065">
    <property type="entry name" value="XPO1/5"/>
</dbReference>
<dbReference type="InterPro" id="IPR014877">
    <property type="entry name" value="XPO1_C_dom"/>
</dbReference>
<dbReference type="InterPro" id="IPR040485">
    <property type="entry name" value="XPO1_repeat_3"/>
</dbReference>
<dbReference type="PANTHER" id="PTHR11223">
    <property type="entry name" value="EXPORTIN 1/5"/>
    <property type="match status" value="1"/>
</dbReference>
<dbReference type="PANTHER" id="PTHR11223:SF2">
    <property type="entry name" value="EXPORTIN-1"/>
    <property type="match status" value="1"/>
</dbReference>
<dbReference type="Pfam" id="PF08767">
    <property type="entry name" value="CRM1_C"/>
    <property type="match status" value="1"/>
</dbReference>
<dbReference type="Pfam" id="PF18777">
    <property type="entry name" value="CRM1_repeat"/>
    <property type="match status" value="1"/>
</dbReference>
<dbReference type="Pfam" id="PF18784">
    <property type="entry name" value="CRM1_repeat_2"/>
    <property type="match status" value="1"/>
</dbReference>
<dbReference type="Pfam" id="PF18787">
    <property type="entry name" value="CRM1_repeat_3"/>
    <property type="match status" value="1"/>
</dbReference>
<dbReference type="Pfam" id="PF03810">
    <property type="entry name" value="IBN_N"/>
    <property type="match status" value="1"/>
</dbReference>
<dbReference type="Pfam" id="PF08389">
    <property type="entry name" value="Xpo1"/>
    <property type="match status" value="1"/>
</dbReference>
<dbReference type="SMART" id="SM01102">
    <property type="entry name" value="CRM1_C"/>
    <property type="match status" value="1"/>
</dbReference>
<dbReference type="SMART" id="SM00913">
    <property type="entry name" value="IBN_N"/>
    <property type="match status" value="1"/>
</dbReference>
<dbReference type="SUPFAM" id="SSF48371">
    <property type="entry name" value="ARM repeat"/>
    <property type="match status" value="1"/>
</dbReference>
<dbReference type="PROSITE" id="PS50166">
    <property type="entry name" value="IMPORTIN_B_NT"/>
    <property type="match status" value="1"/>
</dbReference>
<protein>
    <recommendedName>
        <fullName>Exportin-1</fullName>
    </recommendedName>
    <alternativeName>
        <fullName>Caffeine resistance protein 2</fullName>
    </alternativeName>
    <alternativeName>
        <fullName>Chromosome region maintenance protein 1</fullName>
    </alternativeName>
</protein>
<evidence type="ECO:0000255" key="1">
    <source>
        <dbReference type="PROSITE-ProRule" id="PRU00115"/>
    </source>
</evidence>
<evidence type="ECO:0000269" key="2">
    <source>
    </source>
</evidence>
<evidence type="ECO:0000269" key="3">
    <source>
    </source>
</evidence>
<evidence type="ECO:0000269" key="4">
    <source>
    </source>
</evidence>
<evidence type="ECO:0000269" key="5">
    <source>
    </source>
</evidence>
<evidence type="ECO:0000305" key="6"/>
<feature type="chain" id="PRO_0000204709" description="Exportin-1">
    <location>
        <begin position="1"/>
        <end position="1078"/>
    </location>
</feature>
<feature type="domain" description="Importin N-terminal" evidence="1">
    <location>
        <begin position="34"/>
        <end position="100"/>
    </location>
</feature>
<feature type="mutagenesis site" description="In crm1-1R-9R." evidence="3">
    <original>E</original>
    <variation>K</variation>
    <location>
        <position position="129"/>
    </location>
</feature>
<feature type="mutagenesis site" description="In crm1-14-R." evidence="3">
    <original>E</original>
    <variation>K</variation>
    <location>
        <position position="299"/>
    </location>
</feature>
<feature type="mutagenesis site" description="In crm1-809; cold-sensitive and LMB hypersensitive." evidence="3">
    <original>E</original>
    <variation>K</variation>
    <location>
        <position position="430"/>
    </location>
</feature>
<feature type="mutagenesis site" description="In crm1-N1." evidence="5">
    <original>G</original>
    <variation>D</variation>
    <location>
        <position position="503"/>
    </location>
</feature>
<feature type="mutagenesis site" description="In crm1-K1; LMB resistant." evidence="2">
    <original>C</original>
    <variation>S</variation>
    <location>
        <position position="529"/>
    </location>
</feature>
<feature type="mutagenesis site" description="In crm1-N1." evidence="5">
    <original>M</original>
    <variation>I</variation>
    <location>
        <position position="546"/>
    </location>
</feature>
<feature type="mutagenesis site" description="In crm1-119; LMB resistant." evidence="3">
    <original>F</original>
    <variation>S</variation>
    <location>
        <position position="992"/>
    </location>
</feature>
<feature type="sequence conflict" description="In Ref. 3; no nucleotide entry and 4; BAA03858." evidence="6" ref="3 4">
    <original>EIFQLCSQILERAQKPS</original>
    <variation>RFFNYAHKFSNVRKNLA</variation>
    <location>
        <begin position="192"/>
        <end position="208"/>
    </location>
</feature>
<feature type="sequence conflict" description="In Ref. 6; AAG35722." evidence="6" ref="6">
    <original>IV</original>
    <variation>VI</variation>
    <location>
        <begin position="484"/>
        <end position="485"/>
    </location>
</feature>
<feature type="sequence conflict" description="In Ref. 3; no nucleotide entry." evidence="6" ref="3">
    <location>
        <position position="989"/>
    </location>
</feature>